<keyword id="KW-0997">Cell inner membrane</keyword>
<keyword id="KW-1003">Cell membrane</keyword>
<keyword id="KW-0407">Ion channel</keyword>
<keyword id="KW-0406">Ion transport</keyword>
<keyword id="KW-0472">Membrane</keyword>
<keyword id="KW-0479">Metal-binding</keyword>
<keyword id="KW-1185">Reference proteome</keyword>
<keyword id="KW-0915">Sodium</keyword>
<keyword id="KW-0812">Transmembrane</keyword>
<keyword id="KW-1133">Transmembrane helix</keyword>
<keyword id="KW-0813">Transport</keyword>
<protein>
    <recommendedName>
        <fullName evidence="1">Fluoride-specific ion channel FluC</fullName>
    </recommendedName>
</protein>
<reference key="1">
    <citation type="journal article" date="2002" name="Proc. Natl. Acad. Sci. U.S.A.">
        <title>Extensive mosaic structure revealed by the complete genome sequence of uropathogenic Escherichia coli.</title>
        <authorList>
            <person name="Welch R.A."/>
            <person name="Burland V."/>
            <person name="Plunkett G. III"/>
            <person name="Redford P."/>
            <person name="Roesch P."/>
            <person name="Rasko D."/>
            <person name="Buckles E.L."/>
            <person name="Liou S.-R."/>
            <person name="Boutin A."/>
            <person name="Hackett J."/>
            <person name="Stroud D."/>
            <person name="Mayhew G.F."/>
            <person name="Rose D.J."/>
            <person name="Zhou S."/>
            <person name="Schwartz D.C."/>
            <person name="Perna N.T."/>
            <person name="Mobley H.L.T."/>
            <person name="Donnenberg M.S."/>
            <person name="Blattner F.R."/>
        </authorList>
    </citation>
    <scope>NUCLEOTIDE SEQUENCE [LARGE SCALE GENOMIC DNA]</scope>
    <source>
        <strain>CFT073 / ATCC 700928 / UPEC</strain>
    </source>
</reference>
<evidence type="ECO:0000255" key="1">
    <source>
        <dbReference type="HAMAP-Rule" id="MF_00454"/>
    </source>
</evidence>
<organism>
    <name type="scientific">Escherichia coli O6:H1 (strain CFT073 / ATCC 700928 / UPEC)</name>
    <dbReference type="NCBI Taxonomy" id="199310"/>
    <lineage>
        <taxon>Bacteria</taxon>
        <taxon>Pseudomonadati</taxon>
        <taxon>Pseudomonadota</taxon>
        <taxon>Gammaproteobacteria</taxon>
        <taxon>Enterobacterales</taxon>
        <taxon>Enterobacteriaceae</taxon>
        <taxon>Escherichia</taxon>
    </lineage>
</organism>
<gene>
    <name evidence="1" type="primary">fluC</name>
    <name evidence="1" type="synonym">crcB</name>
    <name type="ordered locus">c0715</name>
</gene>
<comment type="function">
    <text evidence="1">Fluoride-specific ion channel. Important for reducing fluoride concentration in the cell, thus reducing its toxicity.</text>
</comment>
<comment type="catalytic activity">
    <reaction evidence="1">
        <text>fluoride(in) = fluoride(out)</text>
        <dbReference type="Rhea" id="RHEA:76159"/>
        <dbReference type="ChEBI" id="CHEBI:17051"/>
    </reaction>
    <physiologicalReaction direction="left-to-right" evidence="1">
        <dbReference type="Rhea" id="RHEA:76160"/>
    </physiologicalReaction>
</comment>
<comment type="activity regulation">
    <text evidence="1">Na(+) is not transported, but it plays an essential structural role and its presence is essential for fluoride channel function.</text>
</comment>
<comment type="subcellular location">
    <subcellularLocation>
        <location evidence="1">Cell inner membrane</location>
        <topology evidence="1">Multi-pass membrane protein</topology>
    </subcellularLocation>
</comment>
<comment type="similarity">
    <text evidence="1">Belongs to the fluoride channel Fluc/FEX (TC 1.A.43) family.</text>
</comment>
<name>FLUC_ECOL6</name>
<feature type="chain" id="PRO_0000110099" description="Fluoride-specific ion channel FluC">
    <location>
        <begin position="1"/>
        <end position="127"/>
    </location>
</feature>
<feature type="transmembrane region" description="Helical" evidence="1">
    <location>
        <begin position="4"/>
        <end position="24"/>
    </location>
</feature>
<feature type="transmembrane region" description="Helical" evidence="1">
    <location>
        <begin position="35"/>
        <end position="55"/>
    </location>
</feature>
<feature type="transmembrane region" description="Helical" evidence="1">
    <location>
        <begin position="71"/>
        <end position="91"/>
    </location>
</feature>
<feature type="transmembrane region" description="Helical" evidence="1">
    <location>
        <begin position="103"/>
        <end position="123"/>
    </location>
</feature>
<feature type="binding site" evidence="1">
    <location>
        <position position="75"/>
    </location>
    <ligand>
        <name>Na(+)</name>
        <dbReference type="ChEBI" id="CHEBI:29101"/>
        <note>structural</note>
    </ligand>
</feature>
<feature type="binding site" evidence="1">
    <location>
        <position position="78"/>
    </location>
    <ligand>
        <name>Na(+)</name>
        <dbReference type="ChEBI" id="CHEBI:29101"/>
        <note>structural</note>
    </ligand>
</feature>
<sequence>MLQLLLAVFIGGGTGSVARWLLSMRFNPLHQAIPLGTLAANLIGAFIIGMGFAWFSRMTNIDPVWKVLITTGFCGGLTTFSTFSAEVVFLLQEGRFGWALLNVFVNLLGSFAMTALAFWLFSASTAH</sequence>
<proteinExistence type="inferred from homology"/>
<dbReference type="EMBL" id="AE014075">
    <property type="protein sequence ID" value="AAN79188.1"/>
    <property type="molecule type" value="Genomic_DNA"/>
</dbReference>
<dbReference type="RefSeq" id="WP_000939738.1">
    <property type="nucleotide sequence ID" value="NZ_CP051263.1"/>
</dbReference>
<dbReference type="SMR" id="P63860"/>
<dbReference type="STRING" id="199310.c0715"/>
<dbReference type="GeneID" id="93776858"/>
<dbReference type="KEGG" id="ecc:c0715"/>
<dbReference type="eggNOG" id="COG0239">
    <property type="taxonomic scope" value="Bacteria"/>
</dbReference>
<dbReference type="HOGENOM" id="CLU_114342_3_3_6"/>
<dbReference type="BioCyc" id="ECOL199310:C0715-MONOMER"/>
<dbReference type="Proteomes" id="UP000001410">
    <property type="component" value="Chromosome"/>
</dbReference>
<dbReference type="GO" id="GO:0005886">
    <property type="term" value="C:plasma membrane"/>
    <property type="evidence" value="ECO:0007669"/>
    <property type="project" value="UniProtKB-SubCell"/>
</dbReference>
<dbReference type="GO" id="GO:0062054">
    <property type="term" value="F:fluoride channel activity"/>
    <property type="evidence" value="ECO:0007669"/>
    <property type="project" value="UniProtKB-UniRule"/>
</dbReference>
<dbReference type="GO" id="GO:0046872">
    <property type="term" value="F:metal ion binding"/>
    <property type="evidence" value="ECO:0007669"/>
    <property type="project" value="UniProtKB-KW"/>
</dbReference>
<dbReference type="GO" id="GO:0140114">
    <property type="term" value="P:cellular detoxification of fluoride"/>
    <property type="evidence" value="ECO:0007669"/>
    <property type="project" value="UniProtKB-UniRule"/>
</dbReference>
<dbReference type="HAMAP" id="MF_00454">
    <property type="entry name" value="FluC"/>
    <property type="match status" value="1"/>
</dbReference>
<dbReference type="InterPro" id="IPR003691">
    <property type="entry name" value="FluC"/>
</dbReference>
<dbReference type="NCBIfam" id="TIGR00494">
    <property type="entry name" value="crcB"/>
    <property type="match status" value="1"/>
</dbReference>
<dbReference type="NCBIfam" id="NF010792">
    <property type="entry name" value="PRK14196.1"/>
    <property type="match status" value="1"/>
</dbReference>
<dbReference type="PANTHER" id="PTHR28259">
    <property type="entry name" value="FLUORIDE EXPORT PROTEIN 1-RELATED"/>
    <property type="match status" value="1"/>
</dbReference>
<dbReference type="PANTHER" id="PTHR28259:SF1">
    <property type="entry name" value="FLUORIDE EXPORT PROTEIN 1-RELATED"/>
    <property type="match status" value="1"/>
</dbReference>
<dbReference type="Pfam" id="PF02537">
    <property type="entry name" value="CRCB"/>
    <property type="match status" value="1"/>
</dbReference>
<accession>P63860</accession>
<accession>Q8XBR8</accession>